<protein>
    <recommendedName>
        <fullName evidence="1">Queuine tRNA-ribosyltransferase</fullName>
        <ecNumber evidence="1">2.4.2.29</ecNumber>
    </recommendedName>
    <alternativeName>
        <fullName evidence="1">Guanine insertion enzyme</fullName>
    </alternativeName>
    <alternativeName>
        <fullName evidence="1">tRNA-guanine transglycosylase</fullName>
    </alternativeName>
</protein>
<keyword id="KW-0328">Glycosyltransferase</keyword>
<keyword id="KW-0479">Metal-binding</keyword>
<keyword id="KW-0671">Queuosine biosynthesis</keyword>
<keyword id="KW-0808">Transferase</keyword>
<keyword id="KW-0819">tRNA processing</keyword>
<keyword id="KW-0862">Zinc</keyword>
<gene>
    <name evidence="1" type="primary">tgt</name>
    <name type="ordered locus">MGAS10270_Spy0178</name>
</gene>
<reference key="1">
    <citation type="journal article" date="2006" name="Proc. Natl. Acad. Sci. U.S.A.">
        <title>Molecular genetic anatomy of inter- and intraserotype variation in the human bacterial pathogen group A Streptococcus.</title>
        <authorList>
            <person name="Beres S.B."/>
            <person name="Richter E.W."/>
            <person name="Nagiec M.J."/>
            <person name="Sumby P."/>
            <person name="Porcella S.F."/>
            <person name="DeLeo F.R."/>
            <person name="Musser J.M."/>
        </authorList>
    </citation>
    <scope>NUCLEOTIDE SEQUENCE [LARGE SCALE GENOMIC DNA]</scope>
    <source>
        <strain>MGAS10270</strain>
    </source>
</reference>
<dbReference type="EC" id="2.4.2.29" evidence="1"/>
<dbReference type="EMBL" id="CP000260">
    <property type="protein sequence ID" value="ABF33243.1"/>
    <property type="molecule type" value="Genomic_DNA"/>
</dbReference>
<dbReference type="SMR" id="Q1JIT0"/>
<dbReference type="KEGG" id="sph:MGAS10270_Spy0178"/>
<dbReference type="HOGENOM" id="CLU_022060_0_1_9"/>
<dbReference type="UniPathway" id="UPA00392"/>
<dbReference type="Proteomes" id="UP000002436">
    <property type="component" value="Chromosome"/>
</dbReference>
<dbReference type="GO" id="GO:0005829">
    <property type="term" value="C:cytosol"/>
    <property type="evidence" value="ECO:0007669"/>
    <property type="project" value="TreeGrafter"/>
</dbReference>
<dbReference type="GO" id="GO:0046872">
    <property type="term" value="F:metal ion binding"/>
    <property type="evidence" value="ECO:0007669"/>
    <property type="project" value="UniProtKB-KW"/>
</dbReference>
<dbReference type="GO" id="GO:0008479">
    <property type="term" value="F:tRNA-guanosine(34) queuine transglycosylase activity"/>
    <property type="evidence" value="ECO:0007669"/>
    <property type="project" value="UniProtKB-UniRule"/>
</dbReference>
<dbReference type="GO" id="GO:0008616">
    <property type="term" value="P:queuosine biosynthetic process"/>
    <property type="evidence" value="ECO:0007669"/>
    <property type="project" value="UniProtKB-UniRule"/>
</dbReference>
<dbReference type="GO" id="GO:0002099">
    <property type="term" value="P:tRNA wobble guanine modification"/>
    <property type="evidence" value="ECO:0007669"/>
    <property type="project" value="TreeGrafter"/>
</dbReference>
<dbReference type="GO" id="GO:0101030">
    <property type="term" value="P:tRNA-guanine transglycosylation"/>
    <property type="evidence" value="ECO:0007669"/>
    <property type="project" value="InterPro"/>
</dbReference>
<dbReference type="FunFam" id="3.20.20.105:FF:000001">
    <property type="entry name" value="Queuine tRNA-ribosyltransferase"/>
    <property type="match status" value="1"/>
</dbReference>
<dbReference type="Gene3D" id="3.20.20.105">
    <property type="entry name" value="Queuine tRNA-ribosyltransferase-like"/>
    <property type="match status" value="1"/>
</dbReference>
<dbReference type="HAMAP" id="MF_00168">
    <property type="entry name" value="Q_tRNA_Tgt"/>
    <property type="match status" value="1"/>
</dbReference>
<dbReference type="InterPro" id="IPR050076">
    <property type="entry name" value="ArchSynthase1/Queuine_TRR"/>
</dbReference>
<dbReference type="InterPro" id="IPR004803">
    <property type="entry name" value="TGT"/>
</dbReference>
<dbReference type="InterPro" id="IPR036511">
    <property type="entry name" value="TGT-like_sf"/>
</dbReference>
<dbReference type="InterPro" id="IPR002616">
    <property type="entry name" value="tRNA_ribo_trans-like"/>
</dbReference>
<dbReference type="NCBIfam" id="TIGR00430">
    <property type="entry name" value="Q_tRNA_tgt"/>
    <property type="match status" value="1"/>
</dbReference>
<dbReference type="NCBIfam" id="TIGR00449">
    <property type="entry name" value="tgt_general"/>
    <property type="match status" value="1"/>
</dbReference>
<dbReference type="PANTHER" id="PTHR46499">
    <property type="entry name" value="QUEUINE TRNA-RIBOSYLTRANSFERASE"/>
    <property type="match status" value="1"/>
</dbReference>
<dbReference type="PANTHER" id="PTHR46499:SF1">
    <property type="entry name" value="QUEUINE TRNA-RIBOSYLTRANSFERASE"/>
    <property type="match status" value="1"/>
</dbReference>
<dbReference type="Pfam" id="PF01702">
    <property type="entry name" value="TGT"/>
    <property type="match status" value="1"/>
</dbReference>
<dbReference type="SUPFAM" id="SSF51713">
    <property type="entry name" value="tRNA-guanine transglycosylase"/>
    <property type="match status" value="1"/>
</dbReference>
<evidence type="ECO:0000255" key="1">
    <source>
        <dbReference type="HAMAP-Rule" id="MF_00168"/>
    </source>
</evidence>
<sequence>MTDYPIKYRLIKTEKHTGARLGEIITPHGTFPTPMFMPVGTQATVKTQSPEELKAIGSGIILSNTYHLWLRPGDELIARSGGLHKFMNWDQPILTDSGGFQVYSLADSRNITEEGVTFKNHLNGSKMFLSPEKAISIQNNLGSDIMMSFDECPQFYQPYDYVKKSIERTSRWAERGLKAHRRPHDQGLFGIVQGAGFEDLRRQSAADLVAMDFPGYSIGGLAVGESHEEMNAVLDFTTPLLPENKPRYLMGVGAPDSLIDGVIRGVDMFDCVLPTRIARNGTCMTSEGRLVIKNAKFAEDFTPLDHDCDCYTCQNYSRAYIRHLLKADETFGIRLTSYHNLYFLVNLMKKVRQAIMDDNLLEFRQDFLERYGYNKSNRNF</sequence>
<comment type="function">
    <text evidence="1">Catalyzes the base-exchange of a guanine (G) residue with the queuine precursor 7-aminomethyl-7-deazaguanine (PreQ1) at position 34 (anticodon wobble position) in tRNAs with GU(N) anticodons (tRNA-Asp, -Asn, -His and -Tyr). Catalysis occurs through a double-displacement mechanism. The nucleophile active site attacks the C1' of nucleotide 34 to detach the guanine base from the RNA, forming a covalent enzyme-RNA intermediate. The proton acceptor active site deprotonates the incoming PreQ1, allowing a nucleophilic attack on the C1' of the ribose to form the product. After dissociation, two additional enzymatic reactions on the tRNA convert PreQ1 to queuine (Q), resulting in the hypermodified nucleoside queuosine (7-(((4,5-cis-dihydroxy-2-cyclopenten-1-yl)amino)methyl)-7-deazaguanosine).</text>
</comment>
<comment type="catalytic activity">
    <reaction evidence="1">
        <text>7-aminomethyl-7-carbaguanine + guanosine(34) in tRNA = 7-aminomethyl-7-carbaguanosine(34) in tRNA + guanine</text>
        <dbReference type="Rhea" id="RHEA:24104"/>
        <dbReference type="Rhea" id="RHEA-COMP:10341"/>
        <dbReference type="Rhea" id="RHEA-COMP:10342"/>
        <dbReference type="ChEBI" id="CHEBI:16235"/>
        <dbReference type="ChEBI" id="CHEBI:58703"/>
        <dbReference type="ChEBI" id="CHEBI:74269"/>
        <dbReference type="ChEBI" id="CHEBI:82833"/>
        <dbReference type="EC" id="2.4.2.29"/>
    </reaction>
</comment>
<comment type="cofactor">
    <cofactor evidence="1">
        <name>Zn(2+)</name>
        <dbReference type="ChEBI" id="CHEBI:29105"/>
    </cofactor>
    <text evidence="1">Binds 1 zinc ion per subunit.</text>
</comment>
<comment type="pathway">
    <text evidence="1">tRNA modification; tRNA-queuosine biosynthesis.</text>
</comment>
<comment type="subunit">
    <text evidence="1">Homodimer. Within each dimer, one monomer is responsible for RNA recognition and catalysis, while the other monomer binds to the replacement base PreQ1.</text>
</comment>
<comment type="similarity">
    <text evidence="1">Belongs to the queuine tRNA-ribosyltransferase family.</text>
</comment>
<proteinExistence type="inferred from homology"/>
<feature type="chain" id="PRO_1000016870" description="Queuine tRNA-ribosyltransferase">
    <location>
        <begin position="1"/>
        <end position="380"/>
    </location>
</feature>
<feature type="region of interest" description="RNA binding" evidence="1">
    <location>
        <begin position="251"/>
        <end position="257"/>
    </location>
</feature>
<feature type="region of interest" description="RNA binding; important for wobble base 34 recognition" evidence="1">
    <location>
        <begin position="275"/>
        <end position="279"/>
    </location>
</feature>
<feature type="active site" description="Proton acceptor" evidence="1">
    <location>
        <position position="96"/>
    </location>
</feature>
<feature type="active site" description="Nucleophile" evidence="1">
    <location>
        <position position="270"/>
    </location>
</feature>
<feature type="binding site" evidence="1">
    <location>
        <begin position="96"/>
        <end position="100"/>
    </location>
    <ligand>
        <name>substrate</name>
    </ligand>
</feature>
<feature type="binding site" evidence="1">
    <location>
        <position position="150"/>
    </location>
    <ligand>
        <name>substrate</name>
    </ligand>
</feature>
<feature type="binding site" evidence="1">
    <location>
        <position position="193"/>
    </location>
    <ligand>
        <name>substrate</name>
    </ligand>
</feature>
<feature type="binding site" evidence="1">
    <location>
        <position position="220"/>
    </location>
    <ligand>
        <name>substrate</name>
    </ligand>
</feature>
<feature type="binding site" evidence="1">
    <location>
        <position position="308"/>
    </location>
    <ligand>
        <name>Zn(2+)</name>
        <dbReference type="ChEBI" id="CHEBI:29105"/>
    </ligand>
</feature>
<feature type="binding site" evidence="1">
    <location>
        <position position="310"/>
    </location>
    <ligand>
        <name>Zn(2+)</name>
        <dbReference type="ChEBI" id="CHEBI:29105"/>
    </ligand>
</feature>
<feature type="binding site" evidence="1">
    <location>
        <position position="313"/>
    </location>
    <ligand>
        <name>Zn(2+)</name>
        <dbReference type="ChEBI" id="CHEBI:29105"/>
    </ligand>
</feature>
<feature type="binding site" evidence="1">
    <location>
        <position position="339"/>
    </location>
    <ligand>
        <name>Zn(2+)</name>
        <dbReference type="ChEBI" id="CHEBI:29105"/>
    </ligand>
</feature>
<accession>Q1JIT0</accession>
<name>TGT_STRPD</name>
<organism>
    <name type="scientific">Streptococcus pyogenes serotype M2 (strain MGAS10270)</name>
    <dbReference type="NCBI Taxonomy" id="370552"/>
    <lineage>
        <taxon>Bacteria</taxon>
        <taxon>Bacillati</taxon>
        <taxon>Bacillota</taxon>
        <taxon>Bacilli</taxon>
        <taxon>Lactobacillales</taxon>
        <taxon>Streptococcaceae</taxon>
        <taxon>Streptococcus</taxon>
    </lineage>
</organism>